<name>MNTH_LACCB</name>
<dbReference type="EMBL" id="FM177140">
    <property type="protein sequence ID" value="CAQ65168.1"/>
    <property type="molecule type" value="Genomic_DNA"/>
</dbReference>
<dbReference type="SMR" id="B3W6P3"/>
<dbReference type="KEGG" id="lcb:LCABL_00360"/>
<dbReference type="HOGENOM" id="CLU_020088_2_0_9"/>
<dbReference type="GO" id="GO:0005886">
    <property type="term" value="C:plasma membrane"/>
    <property type="evidence" value="ECO:0007669"/>
    <property type="project" value="UniProtKB-SubCell"/>
</dbReference>
<dbReference type="GO" id="GO:0015086">
    <property type="term" value="F:cadmium ion transmembrane transporter activity"/>
    <property type="evidence" value="ECO:0007669"/>
    <property type="project" value="TreeGrafter"/>
</dbReference>
<dbReference type="GO" id="GO:0005384">
    <property type="term" value="F:manganese ion transmembrane transporter activity"/>
    <property type="evidence" value="ECO:0007669"/>
    <property type="project" value="TreeGrafter"/>
</dbReference>
<dbReference type="GO" id="GO:0046872">
    <property type="term" value="F:metal ion binding"/>
    <property type="evidence" value="ECO:0007669"/>
    <property type="project" value="UniProtKB-UniRule"/>
</dbReference>
<dbReference type="GO" id="GO:0015293">
    <property type="term" value="F:symporter activity"/>
    <property type="evidence" value="ECO:0007669"/>
    <property type="project" value="UniProtKB-UniRule"/>
</dbReference>
<dbReference type="GO" id="GO:0034755">
    <property type="term" value="P:iron ion transmembrane transport"/>
    <property type="evidence" value="ECO:0007669"/>
    <property type="project" value="TreeGrafter"/>
</dbReference>
<dbReference type="HAMAP" id="MF_00221">
    <property type="entry name" value="NRAMP"/>
    <property type="match status" value="1"/>
</dbReference>
<dbReference type="InterPro" id="IPR001046">
    <property type="entry name" value="NRAMP_fam"/>
</dbReference>
<dbReference type="NCBIfam" id="TIGR01197">
    <property type="entry name" value="nramp"/>
    <property type="match status" value="1"/>
</dbReference>
<dbReference type="NCBIfam" id="NF037982">
    <property type="entry name" value="Nramp_1"/>
    <property type="match status" value="1"/>
</dbReference>
<dbReference type="NCBIfam" id="NF001923">
    <property type="entry name" value="PRK00701.1"/>
    <property type="match status" value="1"/>
</dbReference>
<dbReference type="PANTHER" id="PTHR11706:SF33">
    <property type="entry name" value="NATURAL RESISTANCE-ASSOCIATED MACROPHAGE PROTEIN 2"/>
    <property type="match status" value="1"/>
</dbReference>
<dbReference type="PANTHER" id="PTHR11706">
    <property type="entry name" value="SOLUTE CARRIER PROTEIN FAMILY 11 MEMBER"/>
    <property type="match status" value="1"/>
</dbReference>
<dbReference type="Pfam" id="PF01566">
    <property type="entry name" value="Nramp"/>
    <property type="match status" value="1"/>
</dbReference>
<dbReference type="PRINTS" id="PR00447">
    <property type="entry name" value="NATRESASSCMP"/>
</dbReference>
<organism>
    <name type="scientific">Lacticaseibacillus casei (strain BL23)</name>
    <name type="common">Lactobacillus casei</name>
    <dbReference type="NCBI Taxonomy" id="543734"/>
    <lineage>
        <taxon>Bacteria</taxon>
        <taxon>Bacillati</taxon>
        <taxon>Bacillota</taxon>
        <taxon>Bacilli</taxon>
        <taxon>Lactobacillales</taxon>
        <taxon>Lactobacillaceae</taxon>
        <taxon>Lacticaseibacillus</taxon>
    </lineage>
</organism>
<sequence length="458" mass="49875">MASEDKKSKREHIIHFEDTPSKSLDEVNGSVEVPHNAGFWKTLAAYTGPGILVAVGYMDPGNWITSIAGGASFKYSLLSVILISSLIAMLLQAMAARLGIVTGRDLAQMTRDHTSKAMGGFLWVITELAIMATDIAEIIGSAIALKLLFNMPLIVGIIITTADVLILLLLMRLGFRKIEAVVATLVLVILLVFAYEVILAQPNVPELLKGYLPHADIVTNKSMLYLSLGIVGATVMPHDLFLGSSISQTRKIDRTKHEEVKKAIKFSTIDSNLQLTMAFIVNSLLLILGAALFFGTSSSVGRFVDLFNALSNSQIVGAIASPMLSMLFAVALLASGQSSTITGTLAGQIIMEGFIHLKMPLWAQRLLTRLMSVTPVLIFAIYYHGNEAKIENLLTFSQVFLSIALPFAVIPLVLYTSDKKIMGEFANRAWVKWTAWFISGVLIILNLYLIAQTLGFVK</sequence>
<reference key="1">
    <citation type="submission" date="2008-06" db="EMBL/GenBank/DDBJ databases">
        <title>Lactobacillus casei BL23 complete genome sequence.</title>
        <authorList>
            <person name="Maze A."/>
            <person name="Boel G."/>
            <person name="Bourand A."/>
            <person name="Loux V."/>
            <person name="Gibrat J.F."/>
            <person name="Zuniga M."/>
            <person name="Hartke A."/>
            <person name="Deutscher J."/>
        </authorList>
    </citation>
    <scope>NUCLEOTIDE SEQUENCE [LARGE SCALE GENOMIC DNA]</scope>
    <source>
        <strain>BL23</strain>
    </source>
</reference>
<feature type="chain" id="PRO_1000100087" description="Divalent metal cation transporter MntH">
    <location>
        <begin position="1"/>
        <end position="458"/>
    </location>
</feature>
<feature type="transmembrane region" description="Helical" evidence="1">
    <location>
        <begin position="38"/>
        <end position="58"/>
    </location>
</feature>
<feature type="transmembrane region" description="Helical" evidence="1">
    <location>
        <begin position="76"/>
        <end position="96"/>
    </location>
</feature>
<feature type="transmembrane region" description="Helical" evidence="1">
    <location>
        <begin position="119"/>
        <end position="139"/>
    </location>
</feature>
<feature type="transmembrane region" description="Helical" evidence="1">
    <location>
        <begin position="151"/>
        <end position="171"/>
    </location>
</feature>
<feature type="transmembrane region" description="Helical" evidence="1">
    <location>
        <begin position="180"/>
        <end position="200"/>
    </location>
</feature>
<feature type="transmembrane region" description="Helical" evidence="1">
    <location>
        <begin position="223"/>
        <end position="243"/>
    </location>
</feature>
<feature type="transmembrane region" description="Helical" evidence="1">
    <location>
        <begin position="275"/>
        <end position="295"/>
    </location>
</feature>
<feature type="transmembrane region" description="Helical" evidence="1">
    <location>
        <begin position="315"/>
        <end position="335"/>
    </location>
</feature>
<feature type="transmembrane region" description="Helical" evidence="1">
    <location>
        <begin position="370"/>
        <end position="390"/>
    </location>
</feature>
<feature type="transmembrane region" description="Helical" evidence="1">
    <location>
        <begin position="393"/>
        <end position="413"/>
    </location>
</feature>
<feature type="transmembrane region" description="Helical" evidence="1">
    <location>
        <begin position="437"/>
        <end position="457"/>
    </location>
</feature>
<proteinExistence type="inferred from homology"/>
<protein>
    <recommendedName>
        <fullName evidence="1">Divalent metal cation transporter MntH</fullName>
    </recommendedName>
</protein>
<keyword id="KW-1003">Cell membrane</keyword>
<keyword id="KW-0406">Ion transport</keyword>
<keyword id="KW-0472">Membrane</keyword>
<keyword id="KW-0769">Symport</keyword>
<keyword id="KW-0812">Transmembrane</keyword>
<keyword id="KW-1133">Transmembrane helix</keyword>
<keyword id="KW-0813">Transport</keyword>
<comment type="function">
    <text evidence="1">H(+)-stimulated, divalent metal cation uptake system.</text>
</comment>
<comment type="subcellular location">
    <subcellularLocation>
        <location evidence="1">Cell membrane</location>
        <topology evidence="1">Multi-pass membrane protein</topology>
    </subcellularLocation>
</comment>
<comment type="similarity">
    <text evidence="1">Belongs to the NRAMP family.</text>
</comment>
<accession>B3W6P3</accession>
<evidence type="ECO:0000255" key="1">
    <source>
        <dbReference type="HAMAP-Rule" id="MF_00221"/>
    </source>
</evidence>
<gene>
    <name evidence="1" type="primary">mntH</name>
    <name type="ordered locus">LCABL_00360</name>
</gene>